<accession>Q1GC33</accession>
<keyword id="KW-1185">Reference proteome</keyword>
<keyword id="KW-0687">Ribonucleoprotein</keyword>
<keyword id="KW-0689">Ribosomal protein</keyword>
<keyword id="KW-0694">RNA-binding</keyword>
<keyword id="KW-0699">rRNA-binding</keyword>
<name>RL9_LACDA</name>
<organism>
    <name type="scientific">Lactobacillus delbrueckii subsp. bulgaricus (strain ATCC 11842 / DSM 20081 / BCRC 10696 / JCM 1002 / NBRC 13953 / NCIMB 11778 / NCTC 12712 / WDCM 00102 / Lb 14)</name>
    <dbReference type="NCBI Taxonomy" id="390333"/>
    <lineage>
        <taxon>Bacteria</taxon>
        <taxon>Bacillati</taxon>
        <taxon>Bacillota</taxon>
        <taxon>Bacilli</taxon>
        <taxon>Lactobacillales</taxon>
        <taxon>Lactobacillaceae</taxon>
        <taxon>Lactobacillus</taxon>
    </lineage>
</organism>
<evidence type="ECO:0000255" key="1">
    <source>
        <dbReference type="HAMAP-Rule" id="MF_00503"/>
    </source>
</evidence>
<evidence type="ECO:0000305" key="2"/>
<sequence length="151" mass="16851">MKVIFMQDVKGRGKLGQVKDVPNGYAQNYLIKQGLAKEANKGNLNTLKRVEANEKAEYEAQKAAAQEIKKQLEADETVVELKAKAGSDSRLFGSISSKKIIEGLDKQFGIKLDKHKLELREPIKVLGYTNVPVKLFKGVESKVRVHVTQEN</sequence>
<proteinExistence type="inferred from homology"/>
<feature type="chain" id="PRO_0000258462" description="Large ribosomal subunit protein bL9">
    <location>
        <begin position="1"/>
        <end position="151"/>
    </location>
</feature>
<protein>
    <recommendedName>
        <fullName evidence="1">Large ribosomal subunit protein bL9</fullName>
    </recommendedName>
    <alternativeName>
        <fullName evidence="2">50S ribosomal protein L9</fullName>
    </alternativeName>
</protein>
<reference key="1">
    <citation type="journal article" date="2006" name="Proc. Natl. Acad. Sci. U.S.A.">
        <title>The complete genome sequence of Lactobacillus bulgaricus reveals extensive and ongoing reductive evolution.</title>
        <authorList>
            <person name="van de Guchte M."/>
            <person name="Penaud S."/>
            <person name="Grimaldi C."/>
            <person name="Barbe V."/>
            <person name="Bryson K."/>
            <person name="Nicolas P."/>
            <person name="Robert C."/>
            <person name="Oztas S."/>
            <person name="Mangenot S."/>
            <person name="Couloux A."/>
            <person name="Loux V."/>
            <person name="Dervyn R."/>
            <person name="Bossy R."/>
            <person name="Bolotin A."/>
            <person name="Batto J.-M."/>
            <person name="Walunas T."/>
            <person name="Gibrat J.-F."/>
            <person name="Bessieres P."/>
            <person name="Weissenbach J."/>
            <person name="Ehrlich S.D."/>
            <person name="Maguin E."/>
        </authorList>
    </citation>
    <scope>NUCLEOTIDE SEQUENCE [LARGE SCALE GENOMIC DNA]</scope>
    <source>
        <strain>ATCC 11842 / DSM 20081 / BCRC 10696 / JCM 1002 / NBRC 13953 / NCIMB 11778 / NCTC 12712 / WDCM 00102 / Lb 14</strain>
    </source>
</reference>
<comment type="function">
    <text evidence="1">Binds to the 23S rRNA.</text>
</comment>
<comment type="similarity">
    <text evidence="1">Belongs to the bacterial ribosomal protein bL9 family.</text>
</comment>
<gene>
    <name evidence="1" type="primary">rplI</name>
    <name type="ordered locus">Ldb0011</name>
</gene>
<dbReference type="EMBL" id="CR954253">
    <property type="protein sequence ID" value="CAI96857.1"/>
    <property type="molecule type" value="Genomic_DNA"/>
</dbReference>
<dbReference type="RefSeq" id="WP_011543467.1">
    <property type="nucleotide sequence ID" value="NC_008054.1"/>
</dbReference>
<dbReference type="SMR" id="Q1GC33"/>
<dbReference type="STRING" id="390333.Ldb0011"/>
<dbReference type="KEGG" id="ldb:Ldb0011"/>
<dbReference type="PATRIC" id="fig|390333.13.peg.539"/>
<dbReference type="eggNOG" id="COG0359">
    <property type="taxonomic scope" value="Bacteria"/>
</dbReference>
<dbReference type="HOGENOM" id="CLU_078938_3_2_9"/>
<dbReference type="BioCyc" id="LDEL390333:LDB_RS00055-MONOMER"/>
<dbReference type="Proteomes" id="UP000001259">
    <property type="component" value="Chromosome"/>
</dbReference>
<dbReference type="GO" id="GO:1990904">
    <property type="term" value="C:ribonucleoprotein complex"/>
    <property type="evidence" value="ECO:0007669"/>
    <property type="project" value="UniProtKB-KW"/>
</dbReference>
<dbReference type="GO" id="GO:0005840">
    <property type="term" value="C:ribosome"/>
    <property type="evidence" value="ECO:0007669"/>
    <property type="project" value="UniProtKB-KW"/>
</dbReference>
<dbReference type="GO" id="GO:0019843">
    <property type="term" value="F:rRNA binding"/>
    <property type="evidence" value="ECO:0007669"/>
    <property type="project" value="UniProtKB-UniRule"/>
</dbReference>
<dbReference type="GO" id="GO:0003735">
    <property type="term" value="F:structural constituent of ribosome"/>
    <property type="evidence" value="ECO:0007669"/>
    <property type="project" value="InterPro"/>
</dbReference>
<dbReference type="GO" id="GO:0006412">
    <property type="term" value="P:translation"/>
    <property type="evidence" value="ECO:0007669"/>
    <property type="project" value="UniProtKB-UniRule"/>
</dbReference>
<dbReference type="Gene3D" id="3.10.430.100">
    <property type="entry name" value="Ribosomal protein L9, C-terminal domain"/>
    <property type="match status" value="1"/>
</dbReference>
<dbReference type="Gene3D" id="3.40.5.10">
    <property type="entry name" value="Ribosomal protein L9, N-terminal domain"/>
    <property type="match status" value="1"/>
</dbReference>
<dbReference type="HAMAP" id="MF_00503">
    <property type="entry name" value="Ribosomal_bL9"/>
    <property type="match status" value="1"/>
</dbReference>
<dbReference type="InterPro" id="IPR000244">
    <property type="entry name" value="Ribosomal_bL9"/>
</dbReference>
<dbReference type="InterPro" id="IPR009027">
    <property type="entry name" value="Ribosomal_bL9/RNase_H1_N"/>
</dbReference>
<dbReference type="InterPro" id="IPR020594">
    <property type="entry name" value="Ribosomal_bL9_bac/chp"/>
</dbReference>
<dbReference type="InterPro" id="IPR020069">
    <property type="entry name" value="Ribosomal_bL9_C"/>
</dbReference>
<dbReference type="InterPro" id="IPR036791">
    <property type="entry name" value="Ribosomal_bL9_C_sf"/>
</dbReference>
<dbReference type="InterPro" id="IPR020070">
    <property type="entry name" value="Ribosomal_bL9_N"/>
</dbReference>
<dbReference type="InterPro" id="IPR036935">
    <property type="entry name" value="Ribosomal_bL9_N_sf"/>
</dbReference>
<dbReference type="NCBIfam" id="TIGR00158">
    <property type="entry name" value="L9"/>
    <property type="match status" value="1"/>
</dbReference>
<dbReference type="PANTHER" id="PTHR21368">
    <property type="entry name" value="50S RIBOSOMAL PROTEIN L9"/>
    <property type="match status" value="1"/>
</dbReference>
<dbReference type="Pfam" id="PF03948">
    <property type="entry name" value="Ribosomal_L9_C"/>
    <property type="match status" value="1"/>
</dbReference>
<dbReference type="Pfam" id="PF01281">
    <property type="entry name" value="Ribosomal_L9_N"/>
    <property type="match status" value="1"/>
</dbReference>
<dbReference type="SUPFAM" id="SSF55658">
    <property type="entry name" value="L9 N-domain-like"/>
    <property type="match status" value="1"/>
</dbReference>
<dbReference type="SUPFAM" id="SSF55653">
    <property type="entry name" value="Ribosomal protein L9 C-domain"/>
    <property type="match status" value="1"/>
</dbReference>
<dbReference type="PROSITE" id="PS00651">
    <property type="entry name" value="RIBOSOMAL_L9"/>
    <property type="match status" value="1"/>
</dbReference>